<dbReference type="EMBL" id="AL123456">
    <property type="protein sequence ID" value="CCP44853.1"/>
    <property type="molecule type" value="Genomic_DNA"/>
</dbReference>
<dbReference type="PIR" id="A70766">
    <property type="entry name" value="A70766"/>
</dbReference>
<dbReference type="RefSeq" id="NP_216594.1">
    <property type="nucleotide sequence ID" value="NC_000962.3"/>
</dbReference>
<dbReference type="RefSeq" id="WP_003911741.1">
    <property type="nucleotide sequence ID" value="NZ_NVQJ01000047.1"/>
</dbReference>
<dbReference type="SMR" id="P9WLK9"/>
<dbReference type="STRING" id="83332.Rv2078"/>
<dbReference type="PaxDb" id="83332-Rv2078"/>
<dbReference type="DNASU" id="888071"/>
<dbReference type="GeneID" id="888071"/>
<dbReference type="KEGG" id="mtu:Rv2078"/>
<dbReference type="KEGG" id="mtv:RVBD_2078"/>
<dbReference type="TubercuList" id="Rv2078"/>
<dbReference type="eggNOG" id="ENOG5031Q7N">
    <property type="taxonomic scope" value="Bacteria"/>
</dbReference>
<dbReference type="InParanoid" id="P9WLK9"/>
<dbReference type="OrthoDB" id="4750359at2"/>
<dbReference type="Proteomes" id="UP000001584">
    <property type="component" value="Chromosome"/>
</dbReference>
<dbReference type="InterPro" id="IPR022534">
    <property type="entry name" value="DUF2563"/>
</dbReference>
<dbReference type="Pfam" id="PF10817">
    <property type="entry name" value="DUF2563"/>
    <property type="match status" value="1"/>
</dbReference>
<gene>
    <name type="ordered locus">Rv2078</name>
    <name type="ORF">MTCY49.17</name>
</gene>
<keyword id="KW-1185">Reference proteome</keyword>
<proteinExistence type="predicted"/>
<accession>P9WLK9</accession>
<accession>L0T8Q5</accession>
<accession>Q10686</accession>
<name>Y2078_MYCTU</name>
<protein>
    <recommendedName>
        <fullName>Uncharacterized protein Rv2078</fullName>
    </recommendedName>
</protein>
<feature type="chain" id="PRO_0000103950" description="Uncharacterized protein Rv2078">
    <location>
        <begin position="1"/>
        <end position="104"/>
    </location>
</feature>
<organism>
    <name type="scientific">Mycobacterium tuberculosis (strain ATCC 25618 / H37Rv)</name>
    <dbReference type="NCBI Taxonomy" id="83332"/>
    <lineage>
        <taxon>Bacteria</taxon>
        <taxon>Bacillati</taxon>
        <taxon>Actinomycetota</taxon>
        <taxon>Actinomycetes</taxon>
        <taxon>Mycobacteriales</taxon>
        <taxon>Mycobacteriaceae</taxon>
        <taxon>Mycobacterium</taxon>
        <taxon>Mycobacterium tuberculosis complex</taxon>
    </lineage>
</organism>
<sequence>MFVDVELLHSGANESHYAGEHAHGGADQLSRGPLLSGMFGTFPVAQTFHDAVGAAHAQQMRNLHAHRQALITVGEKARHAATGFTDMDDGNAAELKAVVCSCAT</sequence>
<reference key="1">
    <citation type="journal article" date="1998" name="Nature">
        <title>Deciphering the biology of Mycobacterium tuberculosis from the complete genome sequence.</title>
        <authorList>
            <person name="Cole S.T."/>
            <person name="Brosch R."/>
            <person name="Parkhill J."/>
            <person name="Garnier T."/>
            <person name="Churcher C.M."/>
            <person name="Harris D.E."/>
            <person name="Gordon S.V."/>
            <person name="Eiglmeier K."/>
            <person name="Gas S."/>
            <person name="Barry C.E. III"/>
            <person name="Tekaia F."/>
            <person name="Badcock K."/>
            <person name="Basham D."/>
            <person name="Brown D."/>
            <person name="Chillingworth T."/>
            <person name="Connor R."/>
            <person name="Davies R.M."/>
            <person name="Devlin K."/>
            <person name="Feltwell T."/>
            <person name="Gentles S."/>
            <person name="Hamlin N."/>
            <person name="Holroyd S."/>
            <person name="Hornsby T."/>
            <person name="Jagels K."/>
            <person name="Krogh A."/>
            <person name="McLean J."/>
            <person name="Moule S."/>
            <person name="Murphy L.D."/>
            <person name="Oliver S."/>
            <person name="Osborne J."/>
            <person name="Quail M.A."/>
            <person name="Rajandream M.A."/>
            <person name="Rogers J."/>
            <person name="Rutter S."/>
            <person name="Seeger K."/>
            <person name="Skelton S."/>
            <person name="Squares S."/>
            <person name="Squares R."/>
            <person name="Sulston J.E."/>
            <person name="Taylor K."/>
            <person name="Whitehead S."/>
            <person name="Barrell B.G."/>
        </authorList>
    </citation>
    <scope>NUCLEOTIDE SEQUENCE [LARGE SCALE GENOMIC DNA]</scope>
    <source>
        <strain>ATCC 25618 / H37Rv</strain>
    </source>
</reference>